<gene>
    <name evidence="1" type="primary">purA1</name>
    <name type="ordered locus">Reut_A2076</name>
</gene>
<proteinExistence type="inferred from homology"/>
<name>PURA1_CUPPJ</name>
<organism>
    <name type="scientific">Cupriavidus pinatubonensis (strain JMP 134 / LMG 1197)</name>
    <name type="common">Cupriavidus necator (strain JMP 134)</name>
    <dbReference type="NCBI Taxonomy" id="264198"/>
    <lineage>
        <taxon>Bacteria</taxon>
        <taxon>Pseudomonadati</taxon>
        <taxon>Pseudomonadota</taxon>
        <taxon>Betaproteobacteria</taxon>
        <taxon>Burkholderiales</taxon>
        <taxon>Burkholderiaceae</taxon>
        <taxon>Cupriavidus</taxon>
    </lineage>
</organism>
<reference key="1">
    <citation type="journal article" date="2010" name="PLoS ONE">
        <title>The complete multipartite genome sequence of Cupriavidus necator JMP134, a versatile pollutant degrader.</title>
        <authorList>
            <person name="Lykidis A."/>
            <person name="Perez-Pantoja D."/>
            <person name="Ledger T."/>
            <person name="Mavromatis K."/>
            <person name="Anderson I.J."/>
            <person name="Ivanova N.N."/>
            <person name="Hooper S.D."/>
            <person name="Lapidus A."/>
            <person name="Lucas S."/>
            <person name="Gonzalez B."/>
            <person name="Kyrpides N.C."/>
        </authorList>
    </citation>
    <scope>NUCLEOTIDE SEQUENCE [LARGE SCALE GENOMIC DNA]</scope>
    <source>
        <strain>JMP134 / LMG 1197</strain>
    </source>
</reference>
<evidence type="ECO:0000255" key="1">
    <source>
        <dbReference type="HAMAP-Rule" id="MF_00011"/>
    </source>
</evidence>
<feature type="chain" id="PRO_0000224312" description="Adenylosuccinate synthetase 1">
    <location>
        <begin position="1"/>
        <end position="446"/>
    </location>
</feature>
<feature type="active site" description="Proton acceptor" evidence="1">
    <location>
        <position position="21"/>
    </location>
</feature>
<feature type="active site" description="Proton donor" evidence="1">
    <location>
        <position position="49"/>
    </location>
</feature>
<feature type="binding site" evidence="1">
    <location>
        <begin position="20"/>
        <end position="26"/>
    </location>
    <ligand>
        <name>GTP</name>
        <dbReference type="ChEBI" id="CHEBI:37565"/>
    </ligand>
</feature>
<feature type="binding site" description="in other chain" evidence="1">
    <location>
        <begin position="21"/>
        <end position="24"/>
    </location>
    <ligand>
        <name>IMP</name>
        <dbReference type="ChEBI" id="CHEBI:58053"/>
        <note>ligand shared between dimeric partners</note>
    </ligand>
</feature>
<feature type="binding site" evidence="1">
    <location>
        <position position="21"/>
    </location>
    <ligand>
        <name>Mg(2+)</name>
        <dbReference type="ChEBI" id="CHEBI:18420"/>
    </ligand>
</feature>
<feature type="binding site" description="in other chain" evidence="1">
    <location>
        <begin position="46"/>
        <end position="49"/>
    </location>
    <ligand>
        <name>IMP</name>
        <dbReference type="ChEBI" id="CHEBI:58053"/>
        <note>ligand shared between dimeric partners</note>
    </ligand>
</feature>
<feature type="binding site" evidence="1">
    <location>
        <begin position="48"/>
        <end position="50"/>
    </location>
    <ligand>
        <name>GTP</name>
        <dbReference type="ChEBI" id="CHEBI:37565"/>
    </ligand>
</feature>
<feature type="binding site" evidence="1">
    <location>
        <position position="48"/>
    </location>
    <ligand>
        <name>Mg(2+)</name>
        <dbReference type="ChEBI" id="CHEBI:18420"/>
    </ligand>
</feature>
<feature type="binding site" description="in other chain" evidence="1">
    <location>
        <position position="137"/>
    </location>
    <ligand>
        <name>IMP</name>
        <dbReference type="ChEBI" id="CHEBI:58053"/>
        <note>ligand shared between dimeric partners</note>
    </ligand>
</feature>
<feature type="binding site" evidence="1">
    <location>
        <position position="151"/>
    </location>
    <ligand>
        <name>IMP</name>
        <dbReference type="ChEBI" id="CHEBI:58053"/>
        <note>ligand shared between dimeric partners</note>
    </ligand>
</feature>
<feature type="binding site" description="in other chain" evidence="1">
    <location>
        <position position="232"/>
    </location>
    <ligand>
        <name>IMP</name>
        <dbReference type="ChEBI" id="CHEBI:58053"/>
        <note>ligand shared between dimeric partners</note>
    </ligand>
</feature>
<feature type="binding site" description="in other chain" evidence="1">
    <location>
        <position position="247"/>
    </location>
    <ligand>
        <name>IMP</name>
        <dbReference type="ChEBI" id="CHEBI:58053"/>
        <note>ligand shared between dimeric partners</note>
    </ligand>
</feature>
<feature type="binding site" evidence="1">
    <location>
        <begin position="315"/>
        <end position="321"/>
    </location>
    <ligand>
        <name>substrate</name>
    </ligand>
</feature>
<feature type="binding site" description="in other chain" evidence="1">
    <location>
        <position position="319"/>
    </location>
    <ligand>
        <name>IMP</name>
        <dbReference type="ChEBI" id="CHEBI:58053"/>
        <note>ligand shared between dimeric partners</note>
    </ligand>
</feature>
<feature type="binding site" evidence="1">
    <location>
        <position position="321"/>
    </location>
    <ligand>
        <name>GTP</name>
        <dbReference type="ChEBI" id="CHEBI:37565"/>
    </ligand>
</feature>
<feature type="binding site" evidence="1">
    <location>
        <begin position="347"/>
        <end position="349"/>
    </location>
    <ligand>
        <name>GTP</name>
        <dbReference type="ChEBI" id="CHEBI:37565"/>
    </ligand>
</feature>
<feature type="binding site" evidence="1">
    <location>
        <begin position="429"/>
        <end position="431"/>
    </location>
    <ligand>
        <name>GTP</name>
        <dbReference type="ChEBI" id="CHEBI:37565"/>
    </ligand>
</feature>
<comment type="function">
    <text evidence="1">Plays an important role in the de novo pathway of purine nucleotide biosynthesis. Catalyzes the first committed step in the biosynthesis of AMP from IMP.</text>
</comment>
<comment type="catalytic activity">
    <reaction evidence="1">
        <text>IMP + L-aspartate + GTP = N(6)-(1,2-dicarboxyethyl)-AMP + GDP + phosphate + 2 H(+)</text>
        <dbReference type="Rhea" id="RHEA:15753"/>
        <dbReference type="ChEBI" id="CHEBI:15378"/>
        <dbReference type="ChEBI" id="CHEBI:29991"/>
        <dbReference type="ChEBI" id="CHEBI:37565"/>
        <dbReference type="ChEBI" id="CHEBI:43474"/>
        <dbReference type="ChEBI" id="CHEBI:57567"/>
        <dbReference type="ChEBI" id="CHEBI:58053"/>
        <dbReference type="ChEBI" id="CHEBI:58189"/>
        <dbReference type="EC" id="6.3.4.4"/>
    </reaction>
</comment>
<comment type="cofactor">
    <cofactor evidence="1">
        <name>Mg(2+)</name>
        <dbReference type="ChEBI" id="CHEBI:18420"/>
    </cofactor>
    <text evidence="1">Binds 1 Mg(2+) ion per subunit.</text>
</comment>
<comment type="pathway">
    <text evidence="1">Purine metabolism; AMP biosynthesis via de novo pathway; AMP from IMP: step 1/2.</text>
</comment>
<comment type="subunit">
    <text evidence="1">Homodimer.</text>
</comment>
<comment type="subcellular location">
    <subcellularLocation>
        <location evidence="1">Cytoplasm</location>
    </subcellularLocation>
</comment>
<comment type="similarity">
    <text evidence="1">Belongs to the adenylosuccinate synthetase family.</text>
</comment>
<protein>
    <recommendedName>
        <fullName evidence="1">Adenylosuccinate synthetase 1</fullName>
        <shortName evidence="1">AMPSase 1</shortName>
        <shortName evidence="1">AdSS 1</shortName>
        <ecNumber evidence="1">6.3.4.4</ecNumber>
    </recommendedName>
    <alternativeName>
        <fullName evidence="1">IMP--aspartate ligase 1</fullName>
    </alternativeName>
</protein>
<keyword id="KW-0963">Cytoplasm</keyword>
<keyword id="KW-0342">GTP-binding</keyword>
<keyword id="KW-0436">Ligase</keyword>
<keyword id="KW-0460">Magnesium</keyword>
<keyword id="KW-0479">Metal-binding</keyword>
<keyword id="KW-0547">Nucleotide-binding</keyword>
<keyword id="KW-0658">Purine biosynthesis</keyword>
<dbReference type="EC" id="6.3.4.4" evidence="1"/>
<dbReference type="EMBL" id="CP000090">
    <property type="protein sequence ID" value="AAZ61440.1"/>
    <property type="molecule type" value="Genomic_DNA"/>
</dbReference>
<dbReference type="SMR" id="Q46ZJ3"/>
<dbReference type="STRING" id="264198.Reut_A2076"/>
<dbReference type="KEGG" id="reu:Reut_A2076"/>
<dbReference type="eggNOG" id="COG0104">
    <property type="taxonomic scope" value="Bacteria"/>
</dbReference>
<dbReference type="HOGENOM" id="CLU_029848_0_0_4"/>
<dbReference type="OrthoDB" id="9807553at2"/>
<dbReference type="UniPathway" id="UPA00075">
    <property type="reaction ID" value="UER00335"/>
</dbReference>
<dbReference type="GO" id="GO:0005737">
    <property type="term" value="C:cytoplasm"/>
    <property type="evidence" value="ECO:0007669"/>
    <property type="project" value="UniProtKB-SubCell"/>
</dbReference>
<dbReference type="GO" id="GO:0004019">
    <property type="term" value="F:adenylosuccinate synthase activity"/>
    <property type="evidence" value="ECO:0007669"/>
    <property type="project" value="UniProtKB-UniRule"/>
</dbReference>
<dbReference type="GO" id="GO:0005525">
    <property type="term" value="F:GTP binding"/>
    <property type="evidence" value="ECO:0007669"/>
    <property type="project" value="UniProtKB-UniRule"/>
</dbReference>
<dbReference type="GO" id="GO:0000287">
    <property type="term" value="F:magnesium ion binding"/>
    <property type="evidence" value="ECO:0007669"/>
    <property type="project" value="UniProtKB-UniRule"/>
</dbReference>
<dbReference type="GO" id="GO:0044208">
    <property type="term" value="P:'de novo' AMP biosynthetic process"/>
    <property type="evidence" value="ECO:0007669"/>
    <property type="project" value="UniProtKB-UniRule"/>
</dbReference>
<dbReference type="GO" id="GO:0046040">
    <property type="term" value="P:IMP metabolic process"/>
    <property type="evidence" value="ECO:0007669"/>
    <property type="project" value="TreeGrafter"/>
</dbReference>
<dbReference type="CDD" id="cd03108">
    <property type="entry name" value="AdSS"/>
    <property type="match status" value="1"/>
</dbReference>
<dbReference type="FunFam" id="1.10.300.10:FF:000001">
    <property type="entry name" value="Adenylosuccinate synthetase"/>
    <property type="match status" value="1"/>
</dbReference>
<dbReference type="FunFam" id="3.90.170.10:FF:000001">
    <property type="entry name" value="Adenylosuccinate synthetase"/>
    <property type="match status" value="1"/>
</dbReference>
<dbReference type="Gene3D" id="3.40.440.10">
    <property type="entry name" value="Adenylosuccinate Synthetase, subunit A, domain 1"/>
    <property type="match status" value="1"/>
</dbReference>
<dbReference type="Gene3D" id="1.10.300.10">
    <property type="entry name" value="Adenylosuccinate Synthetase, subunit A, domain 2"/>
    <property type="match status" value="1"/>
</dbReference>
<dbReference type="Gene3D" id="3.90.170.10">
    <property type="entry name" value="Adenylosuccinate Synthetase, subunit A, domain 3"/>
    <property type="match status" value="1"/>
</dbReference>
<dbReference type="HAMAP" id="MF_00011">
    <property type="entry name" value="Adenylosucc_synth"/>
    <property type="match status" value="1"/>
</dbReference>
<dbReference type="InterPro" id="IPR018220">
    <property type="entry name" value="Adenylosuccin_syn_GTP-bd"/>
</dbReference>
<dbReference type="InterPro" id="IPR033128">
    <property type="entry name" value="Adenylosuccin_syn_Lys_AS"/>
</dbReference>
<dbReference type="InterPro" id="IPR042109">
    <property type="entry name" value="Adenylosuccinate_synth_dom1"/>
</dbReference>
<dbReference type="InterPro" id="IPR042110">
    <property type="entry name" value="Adenylosuccinate_synth_dom2"/>
</dbReference>
<dbReference type="InterPro" id="IPR042111">
    <property type="entry name" value="Adenylosuccinate_synth_dom3"/>
</dbReference>
<dbReference type="InterPro" id="IPR001114">
    <property type="entry name" value="Adenylosuccinate_synthetase"/>
</dbReference>
<dbReference type="InterPro" id="IPR027417">
    <property type="entry name" value="P-loop_NTPase"/>
</dbReference>
<dbReference type="NCBIfam" id="NF002223">
    <property type="entry name" value="PRK01117.1"/>
    <property type="match status" value="1"/>
</dbReference>
<dbReference type="NCBIfam" id="TIGR00184">
    <property type="entry name" value="purA"/>
    <property type="match status" value="1"/>
</dbReference>
<dbReference type="PANTHER" id="PTHR11846">
    <property type="entry name" value="ADENYLOSUCCINATE SYNTHETASE"/>
    <property type="match status" value="1"/>
</dbReference>
<dbReference type="PANTHER" id="PTHR11846:SF0">
    <property type="entry name" value="ADENYLOSUCCINATE SYNTHETASE"/>
    <property type="match status" value="1"/>
</dbReference>
<dbReference type="Pfam" id="PF00709">
    <property type="entry name" value="Adenylsucc_synt"/>
    <property type="match status" value="1"/>
</dbReference>
<dbReference type="SMART" id="SM00788">
    <property type="entry name" value="Adenylsucc_synt"/>
    <property type="match status" value="1"/>
</dbReference>
<dbReference type="SUPFAM" id="SSF52540">
    <property type="entry name" value="P-loop containing nucleoside triphosphate hydrolases"/>
    <property type="match status" value="1"/>
</dbReference>
<dbReference type="PROSITE" id="PS01266">
    <property type="entry name" value="ADENYLOSUCCIN_SYN_1"/>
    <property type="match status" value="1"/>
</dbReference>
<dbReference type="PROSITE" id="PS00513">
    <property type="entry name" value="ADENYLOSUCCIN_SYN_2"/>
    <property type="match status" value="1"/>
</dbReference>
<accession>Q46ZJ3</accession>
<sequence>MSASAVGQGRNVVVIGTQWGDEGKGKIVDWLTDHAKGVVRFQGGHNAGHTLIIGGKKTILRLIPSGIMREGTVCYIGNGVVLSPEALFREIEELETAGLEVQKRLRISEAATLILPYHVAIDKAREARRGAAKIGTTGRGIGPAYEDKVARRALRVQDLFDPQQFAERLRENLDFHNFMLTQYLGAEAVDYQQTLDDALAFAPRLAPMVADVSAELYAVNAAGGNLMFEGAQGTLLDVDHGTYPFVTSSNCVAGAAAAGAGVGPGRLSYILGITKAYCTRVGAGPFPSELYDNDNPARQDQVGVRLANVGKEFGSVTGRPRRTGWLDAAALKRSVQINGVSGLCLTKLDVLDGLESIKLCVGYTLDGKTVDILPRGSDAVARCEPVYEEFPGWNESTFGVKAWDALPEAARVYLKRVEEVVGIPIDMISTGPDRDETILLRHPYLA</sequence>